<keyword id="KW-0551">Lipid droplet</keyword>
<keyword id="KW-0472">Membrane</keyword>
<keyword id="KW-0812">Transmembrane</keyword>
<keyword id="KW-1133">Transmembrane helix</keyword>
<comment type="function">
    <text>May have a structural role to stabilize the lipid body during desiccation of the seed by preventing coalescence of the oil. Probably interacts with both lipid and phospholipid moieties of lipid bodies. May also provide recognition signals for specific lipase anchorage in lipolysis during seedling growth.</text>
</comment>
<comment type="subcellular location">
    <subcellularLocation>
        <location>Lipid droplet</location>
    </subcellularLocation>
    <subcellularLocation>
        <location>Membrane</location>
        <topology>Multi-pass membrane protein</topology>
    </subcellularLocation>
    <text>Surface of oil bodies. Oleosins exist at a monolayer lipid/water interface.</text>
</comment>
<comment type="similarity">
    <text evidence="3">Belongs to the oleosin family.</text>
</comment>
<sequence>TTTTYDRHFTTTQPHYRQDDRSRYDQQTHSQSTSRTLAIIALLPVGGILLGLAALTFIGTLIGLALATPLFVIFSPIIVPAVLTIGLAVTGFLASGTFGLTGLSSLSYLFNMVRQTAGSVPESLDYVKGTLQDAGEYAGQKTKDFGQKIQSTAHEMGDQGQVGVHAQVGGGKEGRKSGDRT</sequence>
<name>OLEO_HELAN</name>
<dbReference type="EMBL" id="X62352">
    <property type="protein sequence ID" value="CAA44224.1"/>
    <property type="molecule type" value="mRNA"/>
</dbReference>
<dbReference type="PIR" id="S23521">
    <property type="entry name" value="S23521"/>
</dbReference>
<dbReference type="PIR" id="S70453">
    <property type="entry name" value="S70453"/>
</dbReference>
<dbReference type="SMR" id="P29529"/>
<dbReference type="GO" id="GO:0016020">
    <property type="term" value="C:membrane"/>
    <property type="evidence" value="ECO:0007669"/>
    <property type="project" value="UniProtKB-SubCell"/>
</dbReference>
<dbReference type="GO" id="GO:0012511">
    <property type="term" value="C:monolayer-surrounded lipid storage body"/>
    <property type="evidence" value="ECO:0007669"/>
    <property type="project" value="InterPro"/>
</dbReference>
<dbReference type="GO" id="GO:0009791">
    <property type="term" value="P:post-embryonic development"/>
    <property type="evidence" value="ECO:0007669"/>
    <property type="project" value="UniProtKB-ARBA"/>
</dbReference>
<dbReference type="GO" id="GO:0048608">
    <property type="term" value="P:reproductive structure development"/>
    <property type="evidence" value="ECO:0007669"/>
    <property type="project" value="UniProtKB-ARBA"/>
</dbReference>
<dbReference type="InterPro" id="IPR000136">
    <property type="entry name" value="Oleosin"/>
</dbReference>
<dbReference type="PANTHER" id="PTHR33203">
    <property type="entry name" value="OLEOSIN"/>
    <property type="match status" value="1"/>
</dbReference>
<dbReference type="PANTHER" id="PTHR33203:SF44">
    <property type="entry name" value="OLEOSIN 20.3 KDA"/>
    <property type="match status" value="1"/>
</dbReference>
<dbReference type="Pfam" id="PF01277">
    <property type="entry name" value="Oleosin"/>
    <property type="match status" value="1"/>
</dbReference>
<dbReference type="PROSITE" id="PS00811">
    <property type="entry name" value="OLEOSINS"/>
    <property type="match status" value="1"/>
</dbReference>
<evidence type="ECO:0000255" key="1"/>
<evidence type="ECO:0000256" key="2">
    <source>
        <dbReference type="SAM" id="MobiDB-lite"/>
    </source>
</evidence>
<evidence type="ECO:0000305" key="3"/>
<proteinExistence type="evidence at transcript level"/>
<reference key="1">
    <citation type="journal article" date="1992" name="Plant Mol. Biol.">
        <title>cDNA sequence of a sunflower oleosin and transcript tissue specificity.</title>
        <authorList>
            <person name="Cummins I."/>
            <person name="Murphy D.J."/>
        </authorList>
    </citation>
    <scope>NUCLEOTIDE SEQUENCE [MRNA]</scope>
    <source>
        <strain>cv. Single Tall</strain>
    </source>
</reference>
<protein>
    <recommendedName>
        <fullName>Oleosin</fullName>
    </recommendedName>
</protein>
<feature type="chain" id="PRO_0000108140" description="Oleosin">
    <location>
        <begin position="1" status="less than"/>
        <end position="181"/>
    </location>
</feature>
<feature type="transmembrane region" description="Helical" evidence="1">
    <location>
        <begin position="38"/>
        <end position="58"/>
    </location>
</feature>
<feature type="transmembrane region" description="Helical" evidence="1">
    <location>
        <begin position="69"/>
        <end position="89"/>
    </location>
</feature>
<feature type="transmembrane region" description="Helical" evidence="1">
    <location>
        <begin position="90"/>
        <end position="110"/>
    </location>
</feature>
<feature type="region of interest" description="Polar">
    <location>
        <begin position="1" status="less than"/>
        <end position="38"/>
    </location>
</feature>
<feature type="region of interest" description="Disordered" evidence="2">
    <location>
        <begin position="1"/>
        <end position="28"/>
    </location>
</feature>
<feature type="region of interest" description="Hydrophobic">
    <location>
        <begin position="39"/>
        <end position="110"/>
    </location>
</feature>
<feature type="region of interest" description="Disordered" evidence="2">
    <location>
        <begin position="155"/>
        <end position="181"/>
    </location>
</feature>
<feature type="compositionally biased region" description="Basic and acidic residues" evidence="2">
    <location>
        <begin position="16"/>
        <end position="26"/>
    </location>
</feature>
<feature type="compositionally biased region" description="Low complexity" evidence="2">
    <location>
        <begin position="158"/>
        <end position="167"/>
    </location>
</feature>
<feature type="compositionally biased region" description="Basic and acidic residues" evidence="2">
    <location>
        <begin position="172"/>
        <end position="181"/>
    </location>
</feature>
<feature type="non-terminal residue">
    <location>
        <position position="1"/>
    </location>
</feature>
<organism>
    <name type="scientific">Helianthus annuus</name>
    <name type="common">Common sunflower</name>
    <dbReference type="NCBI Taxonomy" id="4232"/>
    <lineage>
        <taxon>Eukaryota</taxon>
        <taxon>Viridiplantae</taxon>
        <taxon>Streptophyta</taxon>
        <taxon>Embryophyta</taxon>
        <taxon>Tracheophyta</taxon>
        <taxon>Spermatophyta</taxon>
        <taxon>Magnoliopsida</taxon>
        <taxon>eudicotyledons</taxon>
        <taxon>Gunneridae</taxon>
        <taxon>Pentapetalae</taxon>
        <taxon>asterids</taxon>
        <taxon>campanulids</taxon>
        <taxon>Asterales</taxon>
        <taxon>Asteraceae</taxon>
        <taxon>Asteroideae</taxon>
        <taxon>Heliantheae alliance</taxon>
        <taxon>Heliantheae</taxon>
        <taxon>Helianthus</taxon>
    </lineage>
</organism>
<accession>P29529</accession>